<reference key="1">
    <citation type="submission" date="2006-08" db="EMBL/GenBank/DDBJ databases">
        <title>Complete sequence of Alkalilimnicola ehrilichei MLHE-1.</title>
        <authorList>
            <person name="Copeland A."/>
            <person name="Lucas S."/>
            <person name="Lapidus A."/>
            <person name="Barry K."/>
            <person name="Detter J.C."/>
            <person name="Glavina del Rio T."/>
            <person name="Hammon N."/>
            <person name="Israni S."/>
            <person name="Dalin E."/>
            <person name="Tice H."/>
            <person name="Pitluck S."/>
            <person name="Sims D."/>
            <person name="Brettin T."/>
            <person name="Bruce D."/>
            <person name="Han C."/>
            <person name="Tapia R."/>
            <person name="Gilna P."/>
            <person name="Schmutz J."/>
            <person name="Larimer F."/>
            <person name="Land M."/>
            <person name="Hauser L."/>
            <person name="Kyrpides N."/>
            <person name="Mikhailova N."/>
            <person name="Oremland R.S."/>
            <person name="Hoeft S.E."/>
            <person name="Switzer-Blum J."/>
            <person name="Kulp T."/>
            <person name="King G."/>
            <person name="Tabita R."/>
            <person name="Witte B."/>
            <person name="Santini J.M."/>
            <person name="Basu P."/>
            <person name="Hollibaugh J.T."/>
            <person name="Xie G."/>
            <person name="Stolz J.F."/>
            <person name="Richardson P."/>
        </authorList>
    </citation>
    <scope>NUCLEOTIDE SEQUENCE [LARGE SCALE GENOMIC DNA]</scope>
    <source>
        <strain>ATCC BAA-1101 / DSM 17681 / MLHE-1</strain>
    </source>
</reference>
<dbReference type="EMBL" id="CP000453">
    <property type="protein sequence ID" value="ABI55636.1"/>
    <property type="molecule type" value="Genomic_DNA"/>
</dbReference>
<dbReference type="RefSeq" id="WP_011628032.1">
    <property type="nucleotide sequence ID" value="NC_008340.1"/>
</dbReference>
<dbReference type="SMR" id="Q0AC01"/>
<dbReference type="KEGG" id="aeh:Mlg_0281"/>
<dbReference type="eggNOG" id="COG3017">
    <property type="taxonomic scope" value="Bacteria"/>
</dbReference>
<dbReference type="HOGENOM" id="CLU_092816_2_1_6"/>
<dbReference type="OrthoDB" id="9797618at2"/>
<dbReference type="Proteomes" id="UP000001962">
    <property type="component" value="Chromosome"/>
</dbReference>
<dbReference type="GO" id="GO:0009279">
    <property type="term" value="C:cell outer membrane"/>
    <property type="evidence" value="ECO:0007669"/>
    <property type="project" value="UniProtKB-SubCell"/>
</dbReference>
<dbReference type="GO" id="GO:0044874">
    <property type="term" value="P:lipoprotein localization to outer membrane"/>
    <property type="evidence" value="ECO:0007669"/>
    <property type="project" value="UniProtKB-UniRule"/>
</dbReference>
<dbReference type="GO" id="GO:0015031">
    <property type="term" value="P:protein transport"/>
    <property type="evidence" value="ECO:0007669"/>
    <property type="project" value="UniProtKB-KW"/>
</dbReference>
<dbReference type="CDD" id="cd16326">
    <property type="entry name" value="LolB"/>
    <property type="match status" value="1"/>
</dbReference>
<dbReference type="Gene3D" id="2.50.20.10">
    <property type="entry name" value="Lipoprotein localisation LolA/LolB/LppX"/>
    <property type="match status" value="1"/>
</dbReference>
<dbReference type="HAMAP" id="MF_00233">
    <property type="entry name" value="LolB"/>
    <property type="match status" value="1"/>
</dbReference>
<dbReference type="InterPro" id="IPR029046">
    <property type="entry name" value="LolA/LolB/LppX"/>
</dbReference>
<dbReference type="InterPro" id="IPR004565">
    <property type="entry name" value="OM_lipoprot_LolB"/>
</dbReference>
<dbReference type="NCBIfam" id="TIGR00548">
    <property type="entry name" value="lolB"/>
    <property type="match status" value="1"/>
</dbReference>
<dbReference type="Pfam" id="PF03550">
    <property type="entry name" value="LolB"/>
    <property type="match status" value="1"/>
</dbReference>
<dbReference type="SUPFAM" id="SSF89392">
    <property type="entry name" value="Prokaryotic lipoproteins and lipoprotein localization factors"/>
    <property type="match status" value="1"/>
</dbReference>
<dbReference type="PROSITE" id="PS51257">
    <property type="entry name" value="PROKAR_LIPOPROTEIN"/>
    <property type="match status" value="1"/>
</dbReference>
<evidence type="ECO:0000255" key="1">
    <source>
        <dbReference type="HAMAP-Rule" id="MF_00233"/>
    </source>
</evidence>
<proteinExistence type="inferred from homology"/>
<organism>
    <name type="scientific">Alkalilimnicola ehrlichii (strain ATCC BAA-1101 / DSM 17681 / MLHE-1)</name>
    <dbReference type="NCBI Taxonomy" id="187272"/>
    <lineage>
        <taxon>Bacteria</taxon>
        <taxon>Pseudomonadati</taxon>
        <taxon>Pseudomonadota</taxon>
        <taxon>Gammaproteobacteria</taxon>
        <taxon>Chromatiales</taxon>
        <taxon>Ectothiorhodospiraceae</taxon>
        <taxon>Alkalilimnicola</taxon>
    </lineage>
</organism>
<comment type="function">
    <text evidence="1">Plays a critical role in the incorporation of lipoproteins in the outer membrane after they are released by the LolA protein.</text>
</comment>
<comment type="subunit">
    <text evidence="1">Monomer.</text>
</comment>
<comment type="subcellular location">
    <subcellularLocation>
        <location evidence="1">Cell outer membrane</location>
        <topology evidence="1">Lipid-anchor</topology>
    </subcellularLocation>
</comment>
<comment type="similarity">
    <text evidence="1">Belongs to the LolB family.</text>
</comment>
<feature type="signal peptide" evidence="1">
    <location>
        <begin position="1"/>
        <end position="18"/>
    </location>
</feature>
<feature type="chain" id="PRO_0000336596" description="Outer-membrane lipoprotein LolB">
    <location>
        <begin position="19"/>
        <end position="200"/>
    </location>
</feature>
<feature type="lipid moiety-binding region" description="N-palmitoyl cysteine" evidence="1">
    <location>
        <position position="19"/>
    </location>
</feature>
<feature type="lipid moiety-binding region" description="S-diacylglycerol cysteine" evidence="1">
    <location>
        <position position="19"/>
    </location>
</feature>
<name>LOLB_ALKEH</name>
<gene>
    <name evidence="1" type="primary">lolB</name>
    <name type="ordered locus">Mlg_0281</name>
</gene>
<accession>Q0AC01</accession>
<sequence>MRRGRLLIAGLAALVLSACATLPEPVDDPKARYQEAVERLRAQTDWDASGRAALRTADDAGSLSLEWRQRGETYQVDLRAPLGAGSARLEGGPEGVWLTTSAGDREYAPDPETLVAWFTGYQVPVSALRYWLRGLDAPGPEVERLDLDPAGRPERLHQAGWEVVYRDWSQTNGLPLPRRLDISRGEDSVRVVIRDWSLAP</sequence>
<keyword id="KW-0998">Cell outer membrane</keyword>
<keyword id="KW-0143">Chaperone</keyword>
<keyword id="KW-0449">Lipoprotein</keyword>
<keyword id="KW-0472">Membrane</keyword>
<keyword id="KW-0564">Palmitate</keyword>
<keyword id="KW-0653">Protein transport</keyword>
<keyword id="KW-1185">Reference proteome</keyword>
<keyword id="KW-0732">Signal</keyword>
<keyword id="KW-0813">Transport</keyword>
<protein>
    <recommendedName>
        <fullName evidence="1">Outer-membrane lipoprotein LolB</fullName>
    </recommendedName>
</protein>